<proteinExistence type="inferred from homology"/>
<gene>
    <name evidence="1" type="primary">rplX</name>
    <name evidence="1" type="synonym">rpl24</name>
    <name type="ordered locus">MYCGA0620</name>
    <name type="ORF">MGA_0728</name>
</gene>
<reference key="1">
    <citation type="journal article" date="2000" name="Mol. Biol. (Mosk.)">
        <title>Determination and analysis of the nucleotide sequence of a segment of a Mycoplasma gallisepticum strain A5969 chromosome, containing operons S10 and rrn23-5.</title>
        <authorList>
            <person name="Skamrov A.V."/>
            <person name="Gol'dman M.A."/>
            <person name="Feoktistova E.S."/>
            <person name="Bibilashvili R.S."/>
        </authorList>
    </citation>
    <scope>NUCLEOTIDE SEQUENCE [GENOMIC DNA]</scope>
    <source>
        <strain>A5969Var.B</strain>
    </source>
</reference>
<reference key="2">
    <citation type="journal article" date="2003" name="Microbiology">
        <title>The complete genome sequence of the avian pathogen Mycoplasma gallisepticum strain R(low).</title>
        <authorList>
            <person name="Papazisi L."/>
            <person name="Gorton T.S."/>
            <person name="Kutish G."/>
            <person name="Markham P.F."/>
            <person name="Browning G.F."/>
            <person name="Nguyen D.K."/>
            <person name="Swartzell S."/>
            <person name="Madan A."/>
            <person name="Mahairas G."/>
            <person name="Geary S.J."/>
        </authorList>
    </citation>
    <scope>NUCLEOTIDE SEQUENCE [LARGE SCALE GENOMIC DNA]</scope>
    <source>
        <strain>R(low / passage 15 / clone 2)</strain>
    </source>
</reference>
<comment type="function">
    <text evidence="1">One of two assembly initiator proteins, it binds directly to the 5'-end of the 23S rRNA, where it nucleates assembly of the 50S subunit.</text>
</comment>
<comment type="function">
    <text evidence="1">One of the proteins that surrounds the polypeptide exit tunnel on the outside of the subunit.</text>
</comment>
<comment type="subunit">
    <text evidence="1">Part of the 50S ribosomal subunit.</text>
</comment>
<comment type="similarity">
    <text evidence="1">Belongs to the universal ribosomal protein uL24 family.</text>
</comment>
<dbReference type="EMBL" id="AF036708">
    <property type="protein sequence ID" value="AAB95398.1"/>
    <property type="molecule type" value="Genomic_DNA"/>
</dbReference>
<dbReference type="EMBL" id="AE015450">
    <property type="protein sequence ID" value="AAP56412.1"/>
    <property type="molecule type" value="Genomic_DNA"/>
</dbReference>
<dbReference type="RefSeq" id="WP_011113291.1">
    <property type="nucleotide sequence ID" value="NC_004829.2"/>
</dbReference>
<dbReference type="SMR" id="O52343"/>
<dbReference type="GeneID" id="93509880"/>
<dbReference type="KEGG" id="mga:MGA_0728"/>
<dbReference type="HOGENOM" id="CLU_093315_2_0_14"/>
<dbReference type="OrthoDB" id="9807419at2"/>
<dbReference type="Proteomes" id="UP000001418">
    <property type="component" value="Chromosome"/>
</dbReference>
<dbReference type="GO" id="GO:1990904">
    <property type="term" value="C:ribonucleoprotein complex"/>
    <property type="evidence" value="ECO:0007669"/>
    <property type="project" value="UniProtKB-KW"/>
</dbReference>
<dbReference type="GO" id="GO:0005840">
    <property type="term" value="C:ribosome"/>
    <property type="evidence" value="ECO:0007669"/>
    <property type="project" value="UniProtKB-KW"/>
</dbReference>
<dbReference type="GO" id="GO:0019843">
    <property type="term" value="F:rRNA binding"/>
    <property type="evidence" value="ECO:0007669"/>
    <property type="project" value="UniProtKB-UniRule"/>
</dbReference>
<dbReference type="GO" id="GO:0003735">
    <property type="term" value="F:structural constituent of ribosome"/>
    <property type="evidence" value="ECO:0007669"/>
    <property type="project" value="InterPro"/>
</dbReference>
<dbReference type="GO" id="GO:0006412">
    <property type="term" value="P:translation"/>
    <property type="evidence" value="ECO:0007669"/>
    <property type="project" value="UniProtKB-UniRule"/>
</dbReference>
<dbReference type="CDD" id="cd06089">
    <property type="entry name" value="KOW_RPL26"/>
    <property type="match status" value="1"/>
</dbReference>
<dbReference type="Gene3D" id="2.30.30.30">
    <property type="match status" value="1"/>
</dbReference>
<dbReference type="HAMAP" id="MF_01326_B">
    <property type="entry name" value="Ribosomal_uL24_B"/>
    <property type="match status" value="1"/>
</dbReference>
<dbReference type="InterPro" id="IPR005824">
    <property type="entry name" value="KOW"/>
</dbReference>
<dbReference type="InterPro" id="IPR014722">
    <property type="entry name" value="Rib_uL2_dom2"/>
</dbReference>
<dbReference type="InterPro" id="IPR003256">
    <property type="entry name" value="Ribosomal_uL24"/>
</dbReference>
<dbReference type="InterPro" id="IPR005825">
    <property type="entry name" value="Ribosomal_uL24_CS"/>
</dbReference>
<dbReference type="InterPro" id="IPR041988">
    <property type="entry name" value="Ribosomal_uL24_KOW"/>
</dbReference>
<dbReference type="InterPro" id="IPR008991">
    <property type="entry name" value="Translation_prot_SH3-like_sf"/>
</dbReference>
<dbReference type="NCBIfam" id="TIGR01079">
    <property type="entry name" value="rplX_bact"/>
    <property type="match status" value="1"/>
</dbReference>
<dbReference type="PANTHER" id="PTHR12903">
    <property type="entry name" value="MITOCHONDRIAL RIBOSOMAL PROTEIN L24"/>
    <property type="match status" value="1"/>
</dbReference>
<dbReference type="Pfam" id="PF00467">
    <property type="entry name" value="KOW"/>
    <property type="match status" value="1"/>
</dbReference>
<dbReference type="Pfam" id="PF17136">
    <property type="entry name" value="ribosomal_L24"/>
    <property type="match status" value="1"/>
</dbReference>
<dbReference type="SMART" id="SM00739">
    <property type="entry name" value="KOW"/>
    <property type="match status" value="1"/>
</dbReference>
<dbReference type="SUPFAM" id="SSF50104">
    <property type="entry name" value="Translation proteins SH3-like domain"/>
    <property type="match status" value="1"/>
</dbReference>
<dbReference type="PROSITE" id="PS01108">
    <property type="entry name" value="RIBOSOMAL_L24"/>
    <property type="match status" value="1"/>
</dbReference>
<keyword id="KW-1185">Reference proteome</keyword>
<keyword id="KW-0687">Ribonucleoprotein</keyword>
<keyword id="KW-0689">Ribosomal protein</keyword>
<keyword id="KW-0694">RNA-binding</keyword>
<keyword id="KW-0699">rRNA-binding</keyword>
<feature type="chain" id="PRO_0000130677" description="Large ribosomal subunit protein uL24">
    <location>
        <begin position="1"/>
        <end position="109"/>
    </location>
</feature>
<feature type="region of interest" description="Disordered" evidence="2">
    <location>
        <begin position="85"/>
        <end position="109"/>
    </location>
</feature>
<accession>O52343</accession>
<evidence type="ECO:0000255" key="1">
    <source>
        <dbReference type="HAMAP-Rule" id="MF_01326"/>
    </source>
</evidence>
<evidence type="ECO:0000256" key="2">
    <source>
        <dbReference type="SAM" id="MobiDB-lite"/>
    </source>
</evidence>
<evidence type="ECO:0000305" key="3"/>
<name>RL24_MYCGA</name>
<organism>
    <name type="scientific">Mycoplasmoides gallisepticum (strain R(low / passage 15 / clone 2))</name>
    <name type="common">Mycoplasma gallisepticum</name>
    <dbReference type="NCBI Taxonomy" id="710127"/>
    <lineage>
        <taxon>Bacteria</taxon>
        <taxon>Bacillati</taxon>
        <taxon>Mycoplasmatota</taxon>
        <taxon>Mycoplasmoidales</taxon>
        <taxon>Mycoplasmoidaceae</taxon>
        <taxon>Mycoplasmoides</taxon>
    </lineage>
</organism>
<protein>
    <recommendedName>
        <fullName evidence="1">Large ribosomal subunit protein uL24</fullName>
    </recommendedName>
    <alternativeName>
        <fullName evidence="3">50S ribosomal protein L24</fullName>
    </alternativeName>
</protein>
<sequence length="109" mass="12224">MQRIKKGDKVVIIAGKHKQKTGIVLQVFVKEQRAIVEGINMVKRHTKENAQNQKGGIIEKEAPIHLSNLALLDHKAKDVRPVKVKYGTDPKTNKKVRLSRKTNNLVGGQ</sequence>